<proteinExistence type="evidence at protein level"/>
<name>YM54_YEAST</name>
<comment type="miscellaneous">
    <text evidence="2">Present with 2220 molecules/cell in log phase SD medium.</text>
</comment>
<organism>
    <name type="scientific">Saccharomyces cerevisiae (strain ATCC 204508 / S288c)</name>
    <name type="common">Baker's yeast</name>
    <dbReference type="NCBI Taxonomy" id="559292"/>
    <lineage>
        <taxon>Eukaryota</taxon>
        <taxon>Fungi</taxon>
        <taxon>Dikarya</taxon>
        <taxon>Ascomycota</taxon>
        <taxon>Saccharomycotina</taxon>
        <taxon>Saccharomycetes</taxon>
        <taxon>Saccharomycetales</taxon>
        <taxon>Saccharomycetaceae</taxon>
        <taxon>Saccharomyces</taxon>
    </lineage>
</organism>
<feature type="chain" id="PRO_0000203326" description="Uncharacterized protein YMR196W">
    <location>
        <begin position="1"/>
        <end position="1088"/>
    </location>
</feature>
<feature type="region of interest" description="Disordered" evidence="1">
    <location>
        <begin position="954"/>
        <end position="980"/>
    </location>
</feature>
<feature type="region of interest" description="Disordered" evidence="1">
    <location>
        <begin position="1063"/>
        <end position="1088"/>
    </location>
</feature>
<feature type="compositionally biased region" description="Low complexity" evidence="1">
    <location>
        <begin position="956"/>
        <end position="968"/>
    </location>
</feature>
<feature type="modified residue" description="Phosphoserine" evidence="3">
    <location>
        <position position="299"/>
    </location>
</feature>
<feature type="modified residue" description="Phosphoserine" evidence="3">
    <location>
        <position position="984"/>
    </location>
</feature>
<feature type="modified residue" description="Phosphothreonine" evidence="4">
    <location>
        <position position="1013"/>
    </location>
</feature>
<feature type="modified residue" description="Phosphoserine" evidence="3">
    <location>
        <position position="1081"/>
    </location>
</feature>
<protein>
    <recommendedName>
        <fullName>Uncharacterized protein YMR196W</fullName>
    </recommendedName>
</protein>
<dbReference type="EMBL" id="Z47815">
    <property type="protein sequence ID" value="CAA87818.1"/>
    <property type="molecule type" value="Genomic_DNA"/>
</dbReference>
<dbReference type="EMBL" id="BK006946">
    <property type="protein sequence ID" value="DAA10095.1"/>
    <property type="molecule type" value="Genomic_DNA"/>
</dbReference>
<dbReference type="PIR" id="S50925">
    <property type="entry name" value="S50925"/>
</dbReference>
<dbReference type="RefSeq" id="NP_013923.1">
    <property type="nucleotide sequence ID" value="NM_001182703.1"/>
</dbReference>
<dbReference type="BioGRID" id="35374">
    <property type="interactions" value="70"/>
</dbReference>
<dbReference type="DIP" id="DIP-6550N"/>
<dbReference type="FunCoup" id="Q04336">
    <property type="interactions" value="238"/>
</dbReference>
<dbReference type="IntAct" id="Q04336">
    <property type="interactions" value="7"/>
</dbReference>
<dbReference type="MINT" id="Q04336"/>
<dbReference type="STRING" id="4932.YMR196W"/>
<dbReference type="iPTMnet" id="Q04336"/>
<dbReference type="PaxDb" id="4932-YMR196W"/>
<dbReference type="PeptideAtlas" id="Q04336"/>
<dbReference type="EnsemblFungi" id="YMR196W_mRNA">
    <property type="protein sequence ID" value="YMR196W"/>
    <property type="gene ID" value="YMR196W"/>
</dbReference>
<dbReference type="GeneID" id="855236"/>
<dbReference type="KEGG" id="sce:YMR196W"/>
<dbReference type="AGR" id="SGD:S000004809"/>
<dbReference type="SGD" id="S000004809">
    <property type="gene designation" value="YMR196W"/>
</dbReference>
<dbReference type="VEuPathDB" id="FungiDB:YMR196W"/>
<dbReference type="eggNOG" id="KOG2161">
    <property type="taxonomic scope" value="Eukaryota"/>
</dbReference>
<dbReference type="GeneTree" id="ENSGT00390000017452"/>
<dbReference type="HOGENOM" id="CLU_005386_0_1_1"/>
<dbReference type="InParanoid" id="Q04336"/>
<dbReference type="OMA" id="ERTKYWK"/>
<dbReference type="OrthoDB" id="14419at2759"/>
<dbReference type="BioCyc" id="YEAST:G3O-32883-MONOMER"/>
<dbReference type="BioGRID-ORCS" id="855236">
    <property type="hits" value="0 hits in 10 CRISPR screens"/>
</dbReference>
<dbReference type="PRO" id="PR:Q04336"/>
<dbReference type="Proteomes" id="UP000002311">
    <property type="component" value="Chromosome XIII"/>
</dbReference>
<dbReference type="RNAct" id="Q04336">
    <property type="molecule type" value="protein"/>
</dbReference>
<dbReference type="GO" id="GO:0005737">
    <property type="term" value="C:cytoplasm"/>
    <property type="evidence" value="ECO:0007005"/>
    <property type="project" value="SGD"/>
</dbReference>
<dbReference type="GO" id="GO:0004573">
    <property type="term" value="F:Glc3Man9GlcNAc2 oligosaccharide glucosidase activity"/>
    <property type="evidence" value="ECO:0007669"/>
    <property type="project" value="InterPro"/>
</dbReference>
<dbReference type="GO" id="GO:0009311">
    <property type="term" value="P:oligosaccharide metabolic process"/>
    <property type="evidence" value="ECO:0007669"/>
    <property type="project" value="InterPro"/>
</dbReference>
<dbReference type="FunFam" id="1.50.10.10:FF:000058">
    <property type="entry name" value="YMR196W-like protein"/>
    <property type="match status" value="1"/>
</dbReference>
<dbReference type="Gene3D" id="1.50.10.10">
    <property type="match status" value="2"/>
</dbReference>
<dbReference type="InterPro" id="IPR008928">
    <property type="entry name" value="6-hairpin_glycosidase_sf"/>
</dbReference>
<dbReference type="InterPro" id="IPR012341">
    <property type="entry name" value="6hp_glycosidase-like_sf"/>
</dbReference>
<dbReference type="InterPro" id="IPR004888">
    <property type="entry name" value="Glycoside_hydrolase_63"/>
</dbReference>
<dbReference type="InterPro" id="IPR054491">
    <property type="entry name" value="MGH1-like_GH"/>
</dbReference>
<dbReference type="PANTHER" id="PTHR10412:SF10">
    <property type="entry name" value="GLYCOSYL HYDROLASE FAMILY 63 C-TERMINAL DOMAIN-CONTAINING PROTEIN"/>
    <property type="match status" value="1"/>
</dbReference>
<dbReference type="PANTHER" id="PTHR10412">
    <property type="entry name" value="MANNOSYL-OLIGOSACCHARIDE GLUCOSIDASE"/>
    <property type="match status" value="1"/>
</dbReference>
<dbReference type="Pfam" id="PF22422">
    <property type="entry name" value="MGH1-like_GH"/>
    <property type="match status" value="2"/>
</dbReference>
<dbReference type="SUPFAM" id="SSF48208">
    <property type="entry name" value="Six-hairpin glycosidases"/>
    <property type="match status" value="1"/>
</dbReference>
<accession>Q04336</accession>
<accession>D6W021</accession>
<gene>
    <name type="ordered locus">YMR196W</name>
    <name type="ORF">YM9646.09</name>
</gene>
<keyword id="KW-0597">Phosphoprotein</keyword>
<keyword id="KW-1185">Reference proteome</keyword>
<sequence length="1088" mass="126624">MNKLRDKFVDSTVEEERLRENRNHEKYWYRWGPYLSERSWATVREDYSLNGDAWSNFPFEHANARVFRWGEDGLFGVSDNKQLVCMNVALWNGKDERLKERLFGLTGPQGNHGEDVKELYFYLDNTPTHSYMKALYKYPFKKAFPYKELVQKNGERGYEDKEFEVYDIDGLYRDSETGDNPYFDVFFEMAKDDENPSELNFRLTIHNRSKIDSGELYIAPQLFFRNTWAFDGTRTKDKPLLERDAEAANLINMTHKKYGNCQMVFQPSPGGFSSGTNEEEEDKEVEDIDPLLLFTDNESNLVKLFNEEKNPSEYTKDAFEEYLVQGKTDAVNPENKGTKACAVYHFKNIPPGEYVTVRYKFTNDPKNSIFKAQNLAVVDEDEFDLIFDNREEEADNFYWRITPLPISDELRNLQRQAFSGLLWTKQFYNFTYDAWYNGDANVKPRPPPNRANGRNKNWKHLYIEDILSMPDKWEYPFFASWDTAFHCIPLAMIDPEFAKRQLDLLTREWYMHPNGQIPAYEWNFNDVNPPVHAWAVYRVFKIERNMYNREDRTFLERVFQKLLLNFTWWVNRKDTEGKNVFEGGFLGLDNIGVFNRSEPLPTGGTLEQADSTGWMAFFSLQMLNIALELAKENPVYEDIASKFFEHFILISDSMSFEYATDITGEKCKEVIKQNLWNEADKFYYDAISWGDHKVQLPIRSLVGLIPLYASMTLEPSIIKQFRGFKKRVDWFVNNRPEIFDRNIASMSKKGVGERLLLSLVTKERLTAILSRLLDETEFLSPYGIRSLSKYHEKHPFEMNVNGVEYMVKYLPGESDSGMFGGNSNWRGPIWFPTSFLIMEALQRFYLYYGSDFKVECPVGSGDYLNLAEVAEELGYRMIHLFVPDENGERAIHYGDHSKFLSSDPYFRDYVPFFEYFDGDTGRGLGASHQCGWTALVAKWISDVGISCVRLPRTPRSSVATTASTESSEQGPKMKRMARRKSAKSLVNYTATILDLTEEEKRHHRIGGTHSGLTPQSSISSDKARHLMEEMNEEEGIHETVVPEDRHNFETKLIGKLKDKVKNMKVTDKAKDEDIDPMDPMSPLNKDVS</sequence>
<reference key="1">
    <citation type="journal article" date="1997" name="Nature">
        <title>The nucleotide sequence of Saccharomyces cerevisiae chromosome XIII.</title>
        <authorList>
            <person name="Bowman S."/>
            <person name="Churcher C.M."/>
            <person name="Badcock K."/>
            <person name="Brown D."/>
            <person name="Chillingworth T."/>
            <person name="Connor R."/>
            <person name="Dedman K."/>
            <person name="Devlin K."/>
            <person name="Gentles S."/>
            <person name="Hamlin N."/>
            <person name="Hunt S."/>
            <person name="Jagels K."/>
            <person name="Lye G."/>
            <person name="Moule S."/>
            <person name="Odell C."/>
            <person name="Pearson D."/>
            <person name="Rajandream M.A."/>
            <person name="Rice P."/>
            <person name="Skelton J."/>
            <person name="Walsh S.V."/>
            <person name="Whitehead S."/>
            <person name="Barrell B.G."/>
        </authorList>
    </citation>
    <scope>NUCLEOTIDE SEQUENCE [LARGE SCALE GENOMIC DNA]</scope>
    <source>
        <strain>ATCC 204508 / S288c</strain>
    </source>
</reference>
<reference key="2">
    <citation type="journal article" date="2014" name="G3 (Bethesda)">
        <title>The reference genome sequence of Saccharomyces cerevisiae: Then and now.</title>
        <authorList>
            <person name="Engel S.R."/>
            <person name="Dietrich F.S."/>
            <person name="Fisk D.G."/>
            <person name="Binkley G."/>
            <person name="Balakrishnan R."/>
            <person name="Costanzo M.C."/>
            <person name="Dwight S.S."/>
            <person name="Hitz B.C."/>
            <person name="Karra K."/>
            <person name="Nash R.S."/>
            <person name="Weng S."/>
            <person name="Wong E.D."/>
            <person name="Lloyd P."/>
            <person name="Skrzypek M.S."/>
            <person name="Miyasato S.R."/>
            <person name="Simison M."/>
            <person name="Cherry J.M."/>
        </authorList>
    </citation>
    <scope>GENOME REANNOTATION</scope>
    <source>
        <strain>ATCC 204508 / S288c</strain>
    </source>
</reference>
<reference key="3">
    <citation type="journal article" date="2003" name="Nature">
        <title>Global analysis of protein expression in yeast.</title>
        <authorList>
            <person name="Ghaemmaghami S."/>
            <person name="Huh W.-K."/>
            <person name="Bower K."/>
            <person name="Howson R.W."/>
            <person name="Belle A."/>
            <person name="Dephoure N."/>
            <person name="O'Shea E.K."/>
            <person name="Weissman J.S."/>
        </authorList>
    </citation>
    <scope>LEVEL OF PROTEIN EXPRESSION [LARGE SCALE ANALYSIS]</scope>
</reference>
<reference key="4">
    <citation type="journal article" date="2007" name="Proc. Natl. Acad. Sci. U.S.A.">
        <title>Analysis of phosphorylation sites on proteins from Saccharomyces cerevisiae by electron transfer dissociation (ETD) mass spectrometry.</title>
        <authorList>
            <person name="Chi A."/>
            <person name="Huttenhower C."/>
            <person name="Geer L.Y."/>
            <person name="Coon J.J."/>
            <person name="Syka J.E.P."/>
            <person name="Bai D.L."/>
            <person name="Shabanowitz J."/>
            <person name="Burke D.J."/>
            <person name="Troyanskaya O.G."/>
            <person name="Hunt D.F."/>
        </authorList>
    </citation>
    <scope>IDENTIFICATION BY MASS SPECTROMETRY [LARGE SCALE ANALYSIS]</scope>
</reference>
<reference key="5">
    <citation type="journal article" date="2008" name="Mol. Cell. Proteomics">
        <title>A multidimensional chromatography technology for in-depth phosphoproteome analysis.</title>
        <authorList>
            <person name="Albuquerque C.P."/>
            <person name="Smolka M.B."/>
            <person name="Payne S.H."/>
            <person name="Bafna V."/>
            <person name="Eng J."/>
            <person name="Zhou H."/>
        </authorList>
    </citation>
    <scope>PHOSPHORYLATION [LARGE SCALE ANALYSIS] AT SER-299; SER-984 AND SER-1081</scope>
    <scope>IDENTIFICATION BY MASS SPECTROMETRY [LARGE SCALE ANALYSIS]</scope>
</reference>
<reference key="6">
    <citation type="journal article" date="2009" name="Science">
        <title>Global analysis of Cdk1 substrate phosphorylation sites provides insights into evolution.</title>
        <authorList>
            <person name="Holt L.J."/>
            <person name="Tuch B.B."/>
            <person name="Villen J."/>
            <person name="Johnson A.D."/>
            <person name="Gygi S.P."/>
            <person name="Morgan D.O."/>
        </authorList>
    </citation>
    <scope>PHOSPHORYLATION [LARGE SCALE ANALYSIS] AT THR-1013</scope>
    <scope>IDENTIFICATION BY MASS SPECTROMETRY [LARGE SCALE ANALYSIS]</scope>
</reference>
<evidence type="ECO:0000256" key="1">
    <source>
        <dbReference type="SAM" id="MobiDB-lite"/>
    </source>
</evidence>
<evidence type="ECO:0000269" key="2">
    <source>
    </source>
</evidence>
<evidence type="ECO:0007744" key="3">
    <source>
    </source>
</evidence>
<evidence type="ECO:0007744" key="4">
    <source>
    </source>
</evidence>